<reference key="1">
    <citation type="journal article" date="1988" name="Nature">
        <title>An eIF-4A-like protein is a suppressor of an Escherichia coli mutant defective in 50S ribosomal subunit assembly.</title>
        <authorList>
            <person name="Nishi K."/>
            <person name="Morel-Deville F."/>
            <person name="Hershey J.W.B."/>
            <person name="Leighton T."/>
            <person name="Schnier J."/>
        </authorList>
    </citation>
    <scope>NUCLEOTIDE SEQUENCE [GENOMIC DNA]</scope>
</reference>
<reference key="2">
    <citation type="journal article" date="1989" name="Nature">
        <authorList>
            <person name="Nishi K."/>
            <person name="Morel-Deville F."/>
            <person name="Hershey J.W.B."/>
            <person name="Leighton T."/>
            <person name="Schnier J."/>
        </authorList>
    </citation>
    <scope>ERRATUM OF PUBMED:2461520</scope>
    <scope>SEQUENCE REVISION</scope>
</reference>
<reference key="3">
    <citation type="book" date="1993" name="The translational apparatus">
        <title>Non-ribosomal proteins affecting the assembly of ribosomes in Escherichia coli.</title>
        <editorList>
            <person name="Nierhaus K.H."/>
        </editorList>
        <authorList>
            <person name="Nashimoto H."/>
        </authorList>
    </citation>
    <scope>NUCLEOTIDE SEQUENCE [GENOMIC DNA]</scope>
    <source>
        <strain>K12</strain>
    </source>
</reference>
<reference key="4">
    <citation type="submission" date="1995-09" db="EMBL/GenBank/DDBJ databases">
        <authorList>
            <person name="Nashimoto H."/>
            <person name="Saito N."/>
        </authorList>
    </citation>
    <scope>NUCLEOTIDE SEQUENCE [GENOMIC DNA]</scope>
    <source>
        <strain>K12</strain>
    </source>
</reference>
<reference key="5">
    <citation type="journal article" date="1997" name="Science">
        <title>The complete genome sequence of Escherichia coli K-12.</title>
        <authorList>
            <person name="Blattner F.R."/>
            <person name="Plunkett G. III"/>
            <person name="Bloch C.A."/>
            <person name="Perna N.T."/>
            <person name="Burland V."/>
            <person name="Riley M."/>
            <person name="Collado-Vides J."/>
            <person name="Glasner J.D."/>
            <person name="Rode C.K."/>
            <person name="Mayhew G.F."/>
            <person name="Gregor J."/>
            <person name="Davis N.W."/>
            <person name="Kirkpatrick H.A."/>
            <person name="Goeden M.A."/>
            <person name="Rose D.J."/>
            <person name="Mau B."/>
            <person name="Shao Y."/>
        </authorList>
    </citation>
    <scope>NUCLEOTIDE SEQUENCE [LARGE SCALE GENOMIC DNA]</scope>
    <source>
        <strain>K12 / MG1655 / ATCC 47076</strain>
    </source>
</reference>
<reference key="6">
    <citation type="journal article" date="2006" name="Mol. Syst. Biol.">
        <title>Highly accurate genome sequences of Escherichia coli K-12 strains MG1655 and W3110.</title>
        <authorList>
            <person name="Hayashi K."/>
            <person name="Morooka N."/>
            <person name="Yamamoto Y."/>
            <person name="Fujita K."/>
            <person name="Isono K."/>
            <person name="Choi S."/>
            <person name="Ohtsubo E."/>
            <person name="Baba T."/>
            <person name="Wanner B.L."/>
            <person name="Mori H."/>
            <person name="Horiuchi T."/>
        </authorList>
    </citation>
    <scope>NUCLEOTIDE SEQUENCE [LARGE SCALE GENOMIC DNA]</scope>
    <source>
        <strain>K12 / W3110 / ATCC 27325 / DSM 5911</strain>
    </source>
</reference>
<reference key="7">
    <citation type="journal article" date="2003" name="Mol. Microbiol.">
        <title>The DEAD-box RNA helicase SrmB is involved in the assembly of 50S ribosomal subunits in Escherichia coli.</title>
        <authorList>
            <person name="Charollais J."/>
            <person name="Pflieger D."/>
            <person name="Vinh J."/>
            <person name="Dreyfus M."/>
            <person name="Iost I."/>
        </authorList>
    </citation>
    <scope>FUNCTION IN 50S RIBOSOME BIOGENESIS</scope>
    <scope>DISRUPTION PHENOTYPE</scope>
    <source>
        <strain>B / BL21-DE3</strain>
        <strain>K12 / W3110 / ATCC 27325 / DSM 5911</strain>
    </source>
</reference>
<reference key="8">
    <citation type="journal article" date="2004" name="Biochemistry">
        <title>Studies on three E. coli DEAD-box helicases point to an unwinding mechanism different from that of model DNA helicases.</title>
        <authorList>
            <person name="Bizebard T."/>
            <person name="Ferlenghi I."/>
            <person name="Iost I."/>
            <person name="Dreyfus M."/>
        </authorList>
    </citation>
    <scope>FUNCTION AS RNA-HELICASE</scope>
    <scope>FUNCTION AS ATPASE</scope>
    <scope>CATALYTIC ACTIVITY</scope>
</reference>
<reference key="9">
    <citation type="journal article" date="2004" name="Nucleic Acids Res.">
        <title>CsdA, a cold-shock RNA helicase from Escherichia coli, is involved in the biogenesis of 50S ribosomal subunit.</title>
        <authorList>
            <person name="Charollais J."/>
            <person name="Dreyfus M."/>
            <person name="Iost I."/>
        </authorList>
    </citation>
    <scope>FUNCTION IN 50S RIBOSOME BIOGENESIS</scope>
    <scope>DISRUPTION PHENOTYPE</scope>
    <source>
        <strain>K12 / W3110 / ATCC 27325 / DSM 5911</strain>
    </source>
</reference>
<reference key="10">
    <citation type="journal article" date="2009" name="Nucleic Acids Res.">
        <title>SrmB, a DEAD-box helicase involved in Escherichia coli ribosome assembly, is specifically targeted to 23S rRNA in vivo.</title>
        <authorList>
            <person name="Trubetskoy D."/>
            <person name="Proux F."/>
            <person name="Allemand F."/>
            <person name="Dreyfus M."/>
            <person name="Iost I."/>
        </authorList>
    </citation>
    <scope>INTERACTION WITH L4</scope>
    <scope>L24 AND 23S RRNA</scope>
    <scope>DOMAIN</scope>
    <source>
        <strain>B / BL21-DE3</strain>
    </source>
</reference>
<reference key="11">
    <citation type="submission" date="2011-05" db="PDB data bank">
        <title>Interactions of Escherichia Coli DEAD-box helicases with the RraA protein.</title>
        <authorList>
            <person name="Pietras Z."/>
            <person name="Hardwick S.W."/>
            <person name="Luisi B.F."/>
        </authorList>
    </citation>
    <scope>X-RAY CRYSTALLOGRAPHY (2.90 ANGSTROMS) OF 219-388</scope>
</reference>
<proteinExistence type="evidence at protein level"/>
<sequence length="444" mass="49914">MTVTTFSELELDESLLEALQDKGFTRPTAIQAAAIPPALDGRDVLGSAPTGTGKTAAYLLPALQHLLDFPRKKSGPPRILILTPTRELAMQVSDHARELAKHTHLDIATITGGVAYMNHAEVFSENQDIVVATTGRLLQYIKEENFDCRAVETLILDEADRMLDMGFAQDIEHIAGETRWRKQTLLFSATLEGDAIQDFAERLLEDPVEVSANPSTRERKKIHQWYYRADDLEHKTALLVHLLKQPEATRSIVFVRKRERVHELANWLREAGINNCYLEGEMVQGKRNEAIKRLTEGRVNVLVATDVAARGIDIPDVSHVFNFDMPRSGDTYLHRIGRTARAGRKGTAISLVEAHDHLLLGKVGRYIEEPIKARVIDELRPKTRAPSEKQTGKPSKKVLAKRAEKKKAKEKEKPRVKKRHRDTKNIGKRRKPSGTGVPPQTTEE</sequence>
<comment type="function">
    <text evidence="1 3 4 5">DEAD-box RNA helicase involved in the assembly of the 50S ribosomal subunit at low temperature. Exhibits RNA-stimulated ATP hydrolysis and RNA unwinding activity. Acts before DeaD.</text>
</comment>
<comment type="catalytic activity">
    <reaction evidence="1 5">
        <text>ATP + H2O = ADP + phosphate + H(+)</text>
        <dbReference type="Rhea" id="RHEA:13065"/>
        <dbReference type="ChEBI" id="CHEBI:15377"/>
        <dbReference type="ChEBI" id="CHEBI:15378"/>
        <dbReference type="ChEBI" id="CHEBI:30616"/>
        <dbReference type="ChEBI" id="CHEBI:43474"/>
        <dbReference type="ChEBI" id="CHEBI:456216"/>
        <dbReference type="EC" id="3.6.4.13"/>
    </reaction>
</comment>
<comment type="subunit">
    <text evidence="1 6">Interacts with the 50S ribosomal subunit. Forms a complex with the 50S ribosomal proteins L4 and L24, and a region near the 5'-end of 23S rRNA.</text>
</comment>
<comment type="interaction">
    <interactant intactId="EBI-546628">
        <id>P21507</id>
    </interactant>
    <interactant intactId="EBI-548080">
        <id>P05055</id>
        <label>pnp</label>
    </interactant>
    <organismsDiffer>false</organismsDiffer>
    <experiments>3</experiments>
</comment>
<comment type="interaction">
    <interactant intactId="EBI-546628">
        <id>P21507</id>
    </interactant>
    <interactant intactId="EBI-559071">
        <id>P36979</id>
        <label>rlmN</label>
    </interactant>
    <organismsDiffer>false</organismsDiffer>
    <experiments>4</experiments>
</comment>
<comment type="interaction">
    <interactant intactId="EBI-546628">
        <id>P21507</id>
    </interactant>
    <interactant intactId="EBI-561550">
        <id>P37765</id>
        <label>rluB</label>
    </interactant>
    <organismsDiffer>false</organismsDiffer>
    <experiments>6</experiments>
</comment>
<comment type="interaction">
    <interactant intactId="EBI-546628">
        <id>P21507</id>
    </interactant>
    <interactant intactId="EBI-549958">
        <id>P21513</id>
        <label>rne</label>
    </interactant>
    <organismsDiffer>false</organismsDiffer>
    <experiments>3</experiments>
</comment>
<comment type="subcellular location">
    <subcellularLocation>
        <location evidence="1">Cytoplasm</location>
    </subcellularLocation>
</comment>
<comment type="domain">
    <text evidence="6">The C-terminal extension is not essential for ribosome assembly, but is important for the formation or the stability of the complex.</text>
</comment>
<comment type="disruption phenotype">
    <text evidence="3 4">Cells lacking this gene grow very poorly at 20 degrees Celsius, show a severe deficit of free 50S ribosomal subunits and accumulate an abnormal large ribosomal subunit. Disruption also impairs the processing of both 23S and 16S rRNAs.</text>
</comment>
<comment type="miscellaneous">
    <text evidence="7">Overexpression suppresses a mutant defective in 50S ribosomal subunit assembly.</text>
</comment>
<comment type="similarity">
    <text evidence="1">Belongs to the DEAD box helicase family. SrmB subfamily.</text>
</comment>
<protein>
    <recommendedName>
        <fullName evidence="1">ATP-dependent RNA helicase SrmB</fullName>
        <ecNumber evidence="1">3.6.4.13</ecNumber>
    </recommendedName>
</protein>
<name>SRMB_ECOLI</name>
<accession>P21507</accession>
<accession>Q2MAF4</accession>
<keyword id="KW-0002">3D-structure</keyword>
<keyword id="KW-0067">ATP-binding</keyword>
<keyword id="KW-0963">Cytoplasm</keyword>
<keyword id="KW-0347">Helicase</keyword>
<keyword id="KW-0378">Hydrolase</keyword>
<keyword id="KW-0547">Nucleotide-binding</keyword>
<keyword id="KW-1185">Reference proteome</keyword>
<keyword id="KW-0690">Ribosome biogenesis</keyword>
<keyword id="KW-0694">RNA-binding</keyword>
<dbReference type="EC" id="3.6.4.13" evidence="1"/>
<dbReference type="EMBL" id="X14152">
    <property type="protein sequence ID" value="CAA32364.1"/>
    <property type="molecule type" value="Genomic_DNA"/>
</dbReference>
<dbReference type="EMBL" id="D13169">
    <property type="protein sequence ID" value="BAA02447.1"/>
    <property type="molecule type" value="Genomic_DNA"/>
</dbReference>
<dbReference type="EMBL" id="D64044">
    <property type="protein sequence ID" value="BAA10922.1"/>
    <property type="molecule type" value="Genomic_DNA"/>
</dbReference>
<dbReference type="EMBL" id="U00096">
    <property type="protein sequence ID" value="AAC75629.1"/>
    <property type="molecule type" value="Genomic_DNA"/>
</dbReference>
<dbReference type="EMBL" id="AP009048">
    <property type="protein sequence ID" value="BAE76752.1"/>
    <property type="molecule type" value="Genomic_DNA"/>
</dbReference>
<dbReference type="PIR" id="G65035">
    <property type="entry name" value="G65035"/>
</dbReference>
<dbReference type="RefSeq" id="NP_417071.1">
    <property type="nucleotide sequence ID" value="NC_000913.3"/>
</dbReference>
<dbReference type="RefSeq" id="WP_000219203.1">
    <property type="nucleotide sequence ID" value="NZ_LN832404.1"/>
</dbReference>
<dbReference type="PDB" id="2YJT">
    <property type="method" value="X-ray"/>
    <property type="resolution" value="2.90 A"/>
    <property type="chains" value="D=219-388"/>
</dbReference>
<dbReference type="PDBsum" id="2YJT"/>
<dbReference type="SMR" id="P21507"/>
<dbReference type="BioGRID" id="4263366">
    <property type="interactions" value="237"/>
</dbReference>
<dbReference type="BioGRID" id="851393">
    <property type="interactions" value="5"/>
</dbReference>
<dbReference type="DIP" id="DIP-10920N"/>
<dbReference type="FunCoup" id="P21507">
    <property type="interactions" value="226"/>
</dbReference>
<dbReference type="IntAct" id="P21507">
    <property type="interactions" value="34"/>
</dbReference>
<dbReference type="STRING" id="511145.b2576"/>
<dbReference type="jPOST" id="P21507"/>
<dbReference type="PaxDb" id="511145-b2576"/>
<dbReference type="EnsemblBacteria" id="AAC75629">
    <property type="protein sequence ID" value="AAC75629"/>
    <property type="gene ID" value="b2576"/>
</dbReference>
<dbReference type="GeneID" id="947055"/>
<dbReference type="KEGG" id="ecj:JW2560"/>
<dbReference type="KEGG" id="eco:b2576"/>
<dbReference type="KEGG" id="ecoc:C3026_14270"/>
<dbReference type="PATRIC" id="fig|1411691.4.peg.4158"/>
<dbReference type="EchoBASE" id="EB0968"/>
<dbReference type="eggNOG" id="COG0513">
    <property type="taxonomic scope" value="Bacteria"/>
</dbReference>
<dbReference type="HOGENOM" id="CLU_003041_1_3_6"/>
<dbReference type="InParanoid" id="P21507"/>
<dbReference type="OMA" id="IAAETRW"/>
<dbReference type="OrthoDB" id="9805696at2"/>
<dbReference type="PhylomeDB" id="P21507"/>
<dbReference type="BioCyc" id="EcoCyc:EG10975-MONOMER"/>
<dbReference type="BioCyc" id="MetaCyc:EG10975-MONOMER"/>
<dbReference type="EvolutionaryTrace" id="P21507"/>
<dbReference type="PRO" id="PR:P21507"/>
<dbReference type="Proteomes" id="UP000000625">
    <property type="component" value="Chromosome"/>
</dbReference>
<dbReference type="GO" id="GO:0005829">
    <property type="term" value="C:cytosol"/>
    <property type="evidence" value="ECO:0000314"/>
    <property type="project" value="EcoCyc"/>
</dbReference>
<dbReference type="GO" id="GO:0005524">
    <property type="term" value="F:ATP binding"/>
    <property type="evidence" value="ECO:0007669"/>
    <property type="project" value="UniProtKB-UniRule"/>
</dbReference>
<dbReference type="GO" id="GO:0016887">
    <property type="term" value="F:ATP hydrolysis activity"/>
    <property type="evidence" value="ECO:0007669"/>
    <property type="project" value="RHEA"/>
</dbReference>
<dbReference type="GO" id="GO:0008186">
    <property type="term" value="F:ATP-dependent activity, acting on RNA"/>
    <property type="evidence" value="ECO:0000314"/>
    <property type="project" value="UniProtKB"/>
</dbReference>
<dbReference type="GO" id="GO:0008143">
    <property type="term" value="F:poly(A) binding"/>
    <property type="evidence" value="ECO:0000314"/>
    <property type="project" value="UniProtKB"/>
</dbReference>
<dbReference type="GO" id="GO:0003724">
    <property type="term" value="F:RNA helicase activity"/>
    <property type="evidence" value="ECO:0000314"/>
    <property type="project" value="UniProtKB"/>
</dbReference>
<dbReference type="GO" id="GO:0033592">
    <property type="term" value="F:RNA strand annealing activity"/>
    <property type="evidence" value="ECO:0000314"/>
    <property type="project" value="EcoCyc"/>
</dbReference>
<dbReference type="GO" id="GO:0000027">
    <property type="term" value="P:ribosomal large subunit assembly"/>
    <property type="evidence" value="ECO:0000314"/>
    <property type="project" value="EcoCyc"/>
</dbReference>
<dbReference type="GO" id="GO:0031555">
    <property type="term" value="P:transcriptional attenuation"/>
    <property type="evidence" value="ECO:0000314"/>
    <property type="project" value="EcoCyc"/>
</dbReference>
<dbReference type="CDD" id="cd00268">
    <property type="entry name" value="DEADc"/>
    <property type="match status" value="1"/>
</dbReference>
<dbReference type="CDD" id="cd18787">
    <property type="entry name" value="SF2_C_DEAD"/>
    <property type="match status" value="1"/>
</dbReference>
<dbReference type="FunFam" id="3.40.50.300:FF:000291">
    <property type="entry name" value="ATP-dependent RNA helicase SrmB"/>
    <property type="match status" value="1"/>
</dbReference>
<dbReference type="FunFam" id="3.40.50.300:FF:000555">
    <property type="entry name" value="ATP-dependent RNA helicase SrmB"/>
    <property type="match status" value="1"/>
</dbReference>
<dbReference type="Gene3D" id="3.40.50.300">
    <property type="entry name" value="P-loop containing nucleotide triphosphate hydrolases"/>
    <property type="match status" value="2"/>
</dbReference>
<dbReference type="HAMAP" id="MF_00967">
    <property type="entry name" value="DEAD_helicase_SrmB"/>
    <property type="match status" value="1"/>
</dbReference>
<dbReference type="InterPro" id="IPR011545">
    <property type="entry name" value="DEAD/DEAH_box_helicase_dom"/>
</dbReference>
<dbReference type="InterPro" id="IPR050079">
    <property type="entry name" value="DEAD_box_RNA_helicase"/>
</dbReference>
<dbReference type="InterPro" id="IPR028621">
    <property type="entry name" value="DEAD_helicase_SrmB"/>
</dbReference>
<dbReference type="InterPro" id="IPR014001">
    <property type="entry name" value="Helicase_ATP-bd"/>
</dbReference>
<dbReference type="InterPro" id="IPR001650">
    <property type="entry name" value="Helicase_C-like"/>
</dbReference>
<dbReference type="InterPro" id="IPR027417">
    <property type="entry name" value="P-loop_NTPase"/>
</dbReference>
<dbReference type="InterPro" id="IPR000629">
    <property type="entry name" value="RNA-helicase_DEAD-box_CS"/>
</dbReference>
<dbReference type="InterPro" id="IPR014014">
    <property type="entry name" value="RNA_helicase_DEAD_Q_motif"/>
</dbReference>
<dbReference type="NCBIfam" id="NF008394">
    <property type="entry name" value="PRK11192.1"/>
    <property type="match status" value="1"/>
</dbReference>
<dbReference type="PANTHER" id="PTHR47959">
    <property type="entry name" value="ATP-DEPENDENT RNA HELICASE RHLE-RELATED"/>
    <property type="match status" value="1"/>
</dbReference>
<dbReference type="PANTHER" id="PTHR47959:SF3">
    <property type="entry name" value="ATP-DEPENDENT RNA HELICASE SRMB"/>
    <property type="match status" value="1"/>
</dbReference>
<dbReference type="Pfam" id="PF00270">
    <property type="entry name" value="DEAD"/>
    <property type="match status" value="1"/>
</dbReference>
<dbReference type="Pfam" id="PF00271">
    <property type="entry name" value="Helicase_C"/>
    <property type="match status" value="1"/>
</dbReference>
<dbReference type="SMART" id="SM00487">
    <property type="entry name" value="DEXDc"/>
    <property type="match status" value="1"/>
</dbReference>
<dbReference type="SMART" id="SM00490">
    <property type="entry name" value="HELICc"/>
    <property type="match status" value="1"/>
</dbReference>
<dbReference type="SUPFAM" id="SSF52540">
    <property type="entry name" value="P-loop containing nucleoside triphosphate hydrolases"/>
    <property type="match status" value="1"/>
</dbReference>
<dbReference type="PROSITE" id="PS00039">
    <property type="entry name" value="DEAD_ATP_HELICASE"/>
    <property type="match status" value="1"/>
</dbReference>
<dbReference type="PROSITE" id="PS51192">
    <property type="entry name" value="HELICASE_ATP_BIND_1"/>
    <property type="match status" value="1"/>
</dbReference>
<dbReference type="PROSITE" id="PS51194">
    <property type="entry name" value="HELICASE_CTER"/>
    <property type="match status" value="1"/>
</dbReference>
<dbReference type="PROSITE" id="PS51195">
    <property type="entry name" value="Q_MOTIF"/>
    <property type="match status" value="1"/>
</dbReference>
<organism>
    <name type="scientific">Escherichia coli (strain K12)</name>
    <dbReference type="NCBI Taxonomy" id="83333"/>
    <lineage>
        <taxon>Bacteria</taxon>
        <taxon>Pseudomonadati</taxon>
        <taxon>Pseudomonadota</taxon>
        <taxon>Gammaproteobacteria</taxon>
        <taxon>Enterobacterales</taxon>
        <taxon>Enterobacteriaceae</taxon>
        <taxon>Escherichia</taxon>
    </lineage>
</organism>
<feature type="chain" id="PRO_0000055109" description="ATP-dependent RNA helicase SrmB">
    <location>
        <begin position="1"/>
        <end position="444"/>
    </location>
</feature>
<feature type="domain" description="Helicase ATP-binding" evidence="1">
    <location>
        <begin position="35"/>
        <end position="209"/>
    </location>
</feature>
<feature type="domain" description="Helicase C-terminal" evidence="1">
    <location>
        <begin position="238"/>
        <end position="387"/>
    </location>
</feature>
<feature type="region of interest" description="Disordered" evidence="2">
    <location>
        <begin position="382"/>
        <end position="444"/>
    </location>
</feature>
<feature type="short sequence motif" description="Q motif">
    <location>
        <begin position="4"/>
        <end position="32"/>
    </location>
</feature>
<feature type="short sequence motif" description="DEAD box">
    <location>
        <begin position="157"/>
        <end position="160"/>
    </location>
</feature>
<feature type="compositionally biased region" description="Basic and acidic residues" evidence="2">
    <location>
        <begin position="382"/>
        <end position="391"/>
    </location>
</feature>
<feature type="compositionally biased region" description="Basic residues" evidence="2">
    <location>
        <begin position="394"/>
        <end position="406"/>
    </location>
</feature>
<feature type="compositionally biased region" description="Basic residues" evidence="2">
    <location>
        <begin position="414"/>
        <end position="432"/>
    </location>
</feature>
<feature type="binding site" evidence="1">
    <location>
        <begin position="48"/>
        <end position="55"/>
    </location>
    <ligand>
        <name>ATP</name>
        <dbReference type="ChEBI" id="CHEBI:30616"/>
    </ligand>
</feature>
<feature type="strand" evidence="8">
    <location>
        <begin position="223"/>
        <end position="231"/>
    </location>
</feature>
<feature type="helix" evidence="8">
    <location>
        <begin position="232"/>
        <end position="243"/>
    </location>
</feature>
<feature type="strand" evidence="8">
    <location>
        <begin position="250"/>
        <end position="254"/>
    </location>
</feature>
<feature type="strand" evidence="8">
    <location>
        <begin position="256"/>
        <end position="258"/>
    </location>
</feature>
<feature type="helix" evidence="8">
    <location>
        <begin position="259"/>
        <end position="272"/>
    </location>
</feature>
<feature type="strand" evidence="8">
    <location>
        <begin position="276"/>
        <end position="278"/>
    </location>
</feature>
<feature type="helix" evidence="8">
    <location>
        <begin position="284"/>
        <end position="294"/>
    </location>
</feature>
<feature type="strand" evidence="8">
    <location>
        <begin position="301"/>
        <end position="304"/>
    </location>
</feature>
<feature type="helix" evidence="8">
    <location>
        <begin position="307"/>
        <end position="309"/>
    </location>
</feature>
<feature type="strand" evidence="8">
    <location>
        <begin position="319"/>
        <end position="324"/>
    </location>
</feature>
<feature type="helix" evidence="8">
    <location>
        <begin position="329"/>
        <end position="335"/>
    </location>
</feature>
<feature type="helix" evidence="8">
    <location>
        <begin position="336"/>
        <end position="338"/>
    </location>
</feature>
<feature type="strand" evidence="8">
    <location>
        <begin position="342"/>
        <end position="344"/>
    </location>
</feature>
<feature type="strand" evidence="8">
    <location>
        <begin position="347"/>
        <end position="353"/>
    </location>
</feature>
<feature type="helix" evidence="8">
    <location>
        <begin position="354"/>
        <end position="356"/>
    </location>
</feature>
<feature type="helix" evidence="8">
    <location>
        <begin position="357"/>
        <end position="366"/>
    </location>
</feature>
<feature type="strand" evidence="8">
    <location>
        <begin position="367"/>
        <end position="369"/>
    </location>
</feature>
<feature type="strand" evidence="8">
    <location>
        <begin position="377"/>
        <end position="379"/>
    </location>
</feature>
<gene>
    <name evidence="1" type="primary">srmB</name>
    <name type="synonym">rbaB</name>
    <name type="synonym">rhlA</name>
    <name type="ordered locus">b2576</name>
    <name type="ordered locus">JW2560</name>
</gene>
<evidence type="ECO:0000255" key="1">
    <source>
        <dbReference type="HAMAP-Rule" id="MF_00967"/>
    </source>
</evidence>
<evidence type="ECO:0000256" key="2">
    <source>
        <dbReference type="SAM" id="MobiDB-lite"/>
    </source>
</evidence>
<evidence type="ECO:0000269" key="3">
    <source>
    </source>
</evidence>
<evidence type="ECO:0000269" key="4">
    <source>
    </source>
</evidence>
<evidence type="ECO:0000269" key="5">
    <source>
    </source>
</evidence>
<evidence type="ECO:0000269" key="6">
    <source>
    </source>
</evidence>
<evidence type="ECO:0000305" key="7">
    <source>
    </source>
</evidence>
<evidence type="ECO:0007829" key="8">
    <source>
        <dbReference type="PDB" id="2YJT"/>
    </source>
</evidence>